<accession>P45283</accession>
<proteinExistence type="inferred from homology"/>
<gene>
    <name evidence="2" type="primary">purA</name>
    <name type="ordered locus">HI_1633</name>
</gene>
<name>PURA_HAEIN</name>
<dbReference type="EC" id="6.3.4.4" evidence="2"/>
<dbReference type="EMBL" id="L42023">
    <property type="protein sequence ID" value="AAC23278.1"/>
    <property type="molecule type" value="Genomic_DNA"/>
</dbReference>
<dbReference type="PIR" id="G64133">
    <property type="entry name" value="G64133"/>
</dbReference>
<dbReference type="RefSeq" id="NP_439775.1">
    <property type="nucleotide sequence ID" value="NC_000907.1"/>
</dbReference>
<dbReference type="SMR" id="P45283"/>
<dbReference type="STRING" id="71421.HI_1633"/>
<dbReference type="EnsemblBacteria" id="AAC23278">
    <property type="protein sequence ID" value="AAC23278"/>
    <property type="gene ID" value="HI_1633"/>
</dbReference>
<dbReference type="KEGG" id="hin:HI_1633"/>
<dbReference type="PATRIC" id="fig|71421.8.peg.1708"/>
<dbReference type="eggNOG" id="COG0104">
    <property type="taxonomic scope" value="Bacteria"/>
</dbReference>
<dbReference type="HOGENOM" id="CLU_029848_0_0_6"/>
<dbReference type="OrthoDB" id="9807553at2"/>
<dbReference type="PhylomeDB" id="P45283"/>
<dbReference type="BioCyc" id="HINF71421:G1GJ1-1650-MONOMER"/>
<dbReference type="UniPathway" id="UPA00075">
    <property type="reaction ID" value="UER00335"/>
</dbReference>
<dbReference type="Proteomes" id="UP000000579">
    <property type="component" value="Chromosome"/>
</dbReference>
<dbReference type="GO" id="GO:0005737">
    <property type="term" value="C:cytoplasm"/>
    <property type="evidence" value="ECO:0000318"/>
    <property type="project" value="GO_Central"/>
</dbReference>
<dbReference type="GO" id="GO:0004019">
    <property type="term" value="F:adenylosuccinate synthase activity"/>
    <property type="evidence" value="ECO:0000318"/>
    <property type="project" value="GO_Central"/>
</dbReference>
<dbReference type="GO" id="GO:0005525">
    <property type="term" value="F:GTP binding"/>
    <property type="evidence" value="ECO:0007669"/>
    <property type="project" value="UniProtKB-UniRule"/>
</dbReference>
<dbReference type="GO" id="GO:0000287">
    <property type="term" value="F:magnesium ion binding"/>
    <property type="evidence" value="ECO:0007669"/>
    <property type="project" value="UniProtKB-UniRule"/>
</dbReference>
<dbReference type="GO" id="GO:0044208">
    <property type="term" value="P:'de novo' AMP biosynthetic process"/>
    <property type="evidence" value="ECO:0000318"/>
    <property type="project" value="GO_Central"/>
</dbReference>
<dbReference type="GO" id="GO:0046040">
    <property type="term" value="P:IMP metabolic process"/>
    <property type="evidence" value="ECO:0000318"/>
    <property type="project" value="GO_Central"/>
</dbReference>
<dbReference type="CDD" id="cd03108">
    <property type="entry name" value="AdSS"/>
    <property type="match status" value="1"/>
</dbReference>
<dbReference type="FunFam" id="1.10.300.10:FF:000001">
    <property type="entry name" value="Adenylosuccinate synthetase"/>
    <property type="match status" value="1"/>
</dbReference>
<dbReference type="FunFam" id="3.90.170.10:FF:000001">
    <property type="entry name" value="Adenylosuccinate synthetase"/>
    <property type="match status" value="1"/>
</dbReference>
<dbReference type="Gene3D" id="3.40.440.10">
    <property type="entry name" value="Adenylosuccinate Synthetase, subunit A, domain 1"/>
    <property type="match status" value="1"/>
</dbReference>
<dbReference type="Gene3D" id="1.10.300.10">
    <property type="entry name" value="Adenylosuccinate Synthetase, subunit A, domain 2"/>
    <property type="match status" value="1"/>
</dbReference>
<dbReference type="Gene3D" id="3.90.170.10">
    <property type="entry name" value="Adenylosuccinate Synthetase, subunit A, domain 3"/>
    <property type="match status" value="1"/>
</dbReference>
<dbReference type="HAMAP" id="MF_00011">
    <property type="entry name" value="Adenylosucc_synth"/>
    <property type="match status" value="1"/>
</dbReference>
<dbReference type="InterPro" id="IPR018220">
    <property type="entry name" value="Adenylosuccin_syn_GTP-bd"/>
</dbReference>
<dbReference type="InterPro" id="IPR033128">
    <property type="entry name" value="Adenylosuccin_syn_Lys_AS"/>
</dbReference>
<dbReference type="InterPro" id="IPR042109">
    <property type="entry name" value="Adenylosuccinate_synth_dom1"/>
</dbReference>
<dbReference type="InterPro" id="IPR042110">
    <property type="entry name" value="Adenylosuccinate_synth_dom2"/>
</dbReference>
<dbReference type="InterPro" id="IPR042111">
    <property type="entry name" value="Adenylosuccinate_synth_dom3"/>
</dbReference>
<dbReference type="InterPro" id="IPR001114">
    <property type="entry name" value="Adenylosuccinate_synthetase"/>
</dbReference>
<dbReference type="InterPro" id="IPR027417">
    <property type="entry name" value="P-loop_NTPase"/>
</dbReference>
<dbReference type="NCBIfam" id="NF002223">
    <property type="entry name" value="PRK01117.1"/>
    <property type="match status" value="1"/>
</dbReference>
<dbReference type="NCBIfam" id="TIGR00184">
    <property type="entry name" value="purA"/>
    <property type="match status" value="1"/>
</dbReference>
<dbReference type="PANTHER" id="PTHR11846">
    <property type="entry name" value="ADENYLOSUCCINATE SYNTHETASE"/>
    <property type="match status" value="1"/>
</dbReference>
<dbReference type="PANTHER" id="PTHR11846:SF0">
    <property type="entry name" value="ADENYLOSUCCINATE SYNTHETASE"/>
    <property type="match status" value="1"/>
</dbReference>
<dbReference type="Pfam" id="PF00709">
    <property type="entry name" value="Adenylsucc_synt"/>
    <property type="match status" value="1"/>
</dbReference>
<dbReference type="SMART" id="SM00788">
    <property type="entry name" value="Adenylsucc_synt"/>
    <property type="match status" value="1"/>
</dbReference>
<dbReference type="SUPFAM" id="SSF52540">
    <property type="entry name" value="P-loop containing nucleoside triphosphate hydrolases"/>
    <property type="match status" value="1"/>
</dbReference>
<dbReference type="PROSITE" id="PS01266">
    <property type="entry name" value="ADENYLOSUCCIN_SYN_1"/>
    <property type="match status" value="1"/>
</dbReference>
<dbReference type="PROSITE" id="PS00513">
    <property type="entry name" value="ADENYLOSUCCIN_SYN_2"/>
    <property type="match status" value="1"/>
</dbReference>
<protein>
    <recommendedName>
        <fullName evidence="2">Adenylosuccinate synthetase</fullName>
        <shortName evidence="2">AMPSase</shortName>
        <shortName evidence="2">AdSS</shortName>
        <ecNumber evidence="2">6.3.4.4</ecNumber>
    </recommendedName>
    <alternativeName>
        <fullName evidence="2">IMP--aspartate ligase</fullName>
    </alternativeName>
</protein>
<comment type="function">
    <text evidence="2">Plays an important role in the de novo pathway of purine nucleotide biosynthesis. Catalyzes the first committed step in the biosynthesis of AMP from IMP.</text>
</comment>
<comment type="catalytic activity">
    <reaction evidence="2">
        <text>IMP + L-aspartate + GTP = N(6)-(1,2-dicarboxyethyl)-AMP + GDP + phosphate + 2 H(+)</text>
        <dbReference type="Rhea" id="RHEA:15753"/>
        <dbReference type="ChEBI" id="CHEBI:15378"/>
        <dbReference type="ChEBI" id="CHEBI:29991"/>
        <dbReference type="ChEBI" id="CHEBI:37565"/>
        <dbReference type="ChEBI" id="CHEBI:43474"/>
        <dbReference type="ChEBI" id="CHEBI:57567"/>
        <dbReference type="ChEBI" id="CHEBI:58053"/>
        <dbReference type="ChEBI" id="CHEBI:58189"/>
        <dbReference type="EC" id="6.3.4.4"/>
    </reaction>
</comment>
<comment type="cofactor">
    <cofactor evidence="2">
        <name>Mg(2+)</name>
        <dbReference type="ChEBI" id="CHEBI:18420"/>
    </cofactor>
    <text evidence="2">Binds 1 Mg(2+) ion per subunit.</text>
</comment>
<comment type="pathway">
    <text evidence="2">Purine metabolism; AMP biosynthesis via de novo pathway; AMP from IMP: step 1/2.</text>
</comment>
<comment type="subunit">
    <text evidence="2">Homodimer.</text>
</comment>
<comment type="subcellular location">
    <subcellularLocation>
        <location evidence="2">Cytoplasm</location>
    </subcellularLocation>
</comment>
<comment type="similarity">
    <text evidence="2">Belongs to the adenylosuccinate synthetase family.</text>
</comment>
<organism>
    <name type="scientific">Haemophilus influenzae (strain ATCC 51907 / DSM 11121 / KW20 / Rd)</name>
    <dbReference type="NCBI Taxonomy" id="71421"/>
    <lineage>
        <taxon>Bacteria</taxon>
        <taxon>Pseudomonadati</taxon>
        <taxon>Pseudomonadota</taxon>
        <taxon>Gammaproteobacteria</taxon>
        <taxon>Pasteurellales</taxon>
        <taxon>Pasteurellaceae</taxon>
        <taxon>Haemophilus</taxon>
    </lineage>
</organism>
<sequence length="432" mass="47367">MGKSVVILGAQWGDEGKGKIVDLLTDRVKYVVRYQGGHNAGHTLIINGEKTVLRLIPSGMLHPNVTCLIGNGVVVSPEALMKEMGELESRGIKVRERLLISEACPLILPYHVAMDHAREAALGKKAIGTTGRGIGPAYEDKVARRGLRVGDLFNKEAFAEKLKNILEYYNFQLVNYYKVEPVDYQKTLDDVMAIADVITGMVADITTILDTARKNGEHILFEGAQGTMLDIDHGTYPYVTSSNTTAGGVATGSGFGPRNLDYVLGIIKAYCTRVGGGPFTTELFDDVGAEIARKGNEFGAVTGRPRRCGWFDAVAIRRAIQLNSISGFCMTKLDVLDGFDEVKICVAYKMPNGEIVEYAPLAAKDWEGVEPIYETLPGWKENTFRITDVNKLPQNCINYIKRIEEVTGVPIDILSTGPDRVETMILREPFAA</sequence>
<evidence type="ECO:0000250" key="1"/>
<evidence type="ECO:0000255" key="2">
    <source>
        <dbReference type="HAMAP-Rule" id="MF_00011"/>
    </source>
</evidence>
<reference key="1">
    <citation type="journal article" date="1995" name="Science">
        <title>Whole-genome random sequencing and assembly of Haemophilus influenzae Rd.</title>
        <authorList>
            <person name="Fleischmann R.D."/>
            <person name="Adams M.D."/>
            <person name="White O."/>
            <person name="Clayton R.A."/>
            <person name="Kirkness E.F."/>
            <person name="Kerlavage A.R."/>
            <person name="Bult C.J."/>
            <person name="Tomb J.-F."/>
            <person name="Dougherty B.A."/>
            <person name="Merrick J.M."/>
            <person name="McKenney K."/>
            <person name="Sutton G.G."/>
            <person name="FitzHugh W."/>
            <person name="Fields C.A."/>
            <person name="Gocayne J.D."/>
            <person name="Scott J.D."/>
            <person name="Shirley R."/>
            <person name="Liu L.-I."/>
            <person name="Glodek A."/>
            <person name="Kelley J.M."/>
            <person name="Weidman J.F."/>
            <person name="Phillips C.A."/>
            <person name="Spriggs T."/>
            <person name="Hedblom E."/>
            <person name="Cotton M.D."/>
            <person name="Utterback T.R."/>
            <person name="Hanna M.C."/>
            <person name="Nguyen D.T."/>
            <person name="Saudek D.M."/>
            <person name="Brandon R.C."/>
            <person name="Fine L.D."/>
            <person name="Fritchman J.L."/>
            <person name="Fuhrmann J.L."/>
            <person name="Geoghagen N.S.M."/>
            <person name="Gnehm C.L."/>
            <person name="McDonald L.A."/>
            <person name="Small K.V."/>
            <person name="Fraser C.M."/>
            <person name="Smith H.O."/>
            <person name="Venter J.C."/>
        </authorList>
    </citation>
    <scope>NUCLEOTIDE SEQUENCE [LARGE SCALE GENOMIC DNA]</scope>
    <source>
        <strain>ATCC 51907 / DSM 11121 / KW20 / Rd</strain>
    </source>
</reference>
<feature type="initiator methionine" description="Removed" evidence="1">
    <location>
        <position position="1"/>
    </location>
</feature>
<feature type="chain" id="PRO_0000095183" description="Adenylosuccinate synthetase">
    <location>
        <begin position="2"/>
        <end position="432"/>
    </location>
</feature>
<feature type="active site" description="Proton acceptor" evidence="2">
    <location>
        <position position="14"/>
    </location>
</feature>
<feature type="active site" description="Proton donor" evidence="2">
    <location>
        <position position="42"/>
    </location>
</feature>
<feature type="binding site" evidence="2">
    <location>
        <begin position="13"/>
        <end position="19"/>
    </location>
    <ligand>
        <name>GTP</name>
        <dbReference type="ChEBI" id="CHEBI:37565"/>
    </ligand>
</feature>
<feature type="binding site" description="in other chain" evidence="2">
    <location>
        <begin position="14"/>
        <end position="17"/>
    </location>
    <ligand>
        <name>IMP</name>
        <dbReference type="ChEBI" id="CHEBI:58053"/>
        <note>ligand shared between dimeric partners</note>
    </ligand>
</feature>
<feature type="binding site" evidence="2">
    <location>
        <position position="14"/>
    </location>
    <ligand>
        <name>Mg(2+)</name>
        <dbReference type="ChEBI" id="CHEBI:18420"/>
    </ligand>
</feature>
<feature type="binding site" description="in other chain" evidence="2">
    <location>
        <begin position="39"/>
        <end position="42"/>
    </location>
    <ligand>
        <name>IMP</name>
        <dbReference type="ChEBI" id="CHEBI:58053"/>
        <note>ligand shared between dimeric partners</note>
    </ligand>
</feature>
<feature type="binding site" evidence="2">
    <location>
        <begin position="41"/>
        <end position="43"/>
    </location>
    <ligand>
        <name>GTP</name>
        <dbReference type="ChEBI" id="CHEBI:37565"/>
    </ligand>
</feature>
<feature type="binding site" evidence="2">
    <location>
        <position position="41"/>
    </location>
    <ligand>
        <name>Mg(2+)</name>
        <dbReference type="ChEBI" id="CHEBI:18420"/>
    </ligand>
</feature>
<feature type="binding site" description="in other chain" evidence="2">
    <location>
        <position position="130"/>
    </location>
    <ligand>
        <name>IMP</name>
        <dbReference type="ChEBI" id="CHEBI:58053"/>
        <note>ligand shared between dimeric partners</note>
    </ligand>
</feature>
<feature type="binding site" evidence="2">
    <location>
        <position position="144"/>
    </location>
    <ligand>
        <name>IMP</name>
        <dbReference type="ChEBI" id="CHEBI:58053"/>
        <note>ligand shared between dimeric partners</note>
    </ligand>
</feature>
<feature type="binding site" description="in other chain" evidence="2">
    <location>
        <position position="225"/>
    </location>
    <ligand>
        <name>IMP</name>
        <dbReference type="ChEBI" id="CHEBI:58053"/>
        <note>ligand shared between dimeric partners</note>
    </ligand>
</feature>
<feature type="binding site" description="in other chain" evidence="2">
    <location>
        <position position="240"/>
    </location>
    <ligand>
        <name>IMP</name>
        <dbReference type="ChEBI" id="CHEBI:58053"/>
        <note>ligand shared between dimeric partners</note>
    </ligand>
</feature>
<feature type="binding site" evidence="2">
    <location>
        <begin position="300"/>
        <end position="306"/>
    </location>
    <ligand>
        <name>substrate</name>
    </ligand>
</feature>
<feature type="binding site" description="in other chain" evidence="2">
    <location>
        <position position="304"/>
    </location>
    <ligand>
        <name>IMP</name>
        <dbReference type="ChEBI" id="CHEBI:58053"/>
        <note>ligand shared between dimeric partners</note>
    </ligand>
</feature>
<feature type="binding site" evidence="2">
    <location>
        <position position="306"/>
    </location>
    <ligand>
        <name>GTP</name>
        <dbReference type="ChEBI" id="CHEBI:37565"/>
    </ligand>
</feature>
<feature type="binding site" evidence="2">
    <location>
        <begin position="332"/>
        <end position="334"/>
    </location>
    <ligand>
        <name>GTP</name>
        <dbReference type="ChEBI" id="CHEBI:37565"/>
    </ligand>
</feature>
<feature type="binding site" evidence="2">
    <location>
        <begin position="415"/>
        <end position="417"/>
    </location>
    <ligand>
        <name>GTP</name>
        <dbReference type="ChEBI" id="CHEBI:37565"/>
    </ligand>
</feature>
<keyword id="KW-0963">Cytoplasm</keyword>
<keyword id="KW-0342">GTP-binding</keyword>
<keyword id="KW-0436">Ligase</keyword>
<keyword id="KW-0460">Magnesium</keyword>
<keyword id="KW-0479">Metal-binding</keyword>
<keyword id="KW-0547">Nucleotide-binding</keyword>
<keyword id="KW-0658">Purine biosynthesis</keyword>
<keyword id="KW-1185">Reference proteome</keyword>